<organism>
    <name type="scientific">Staphylococcus aureus (strain JH1)</name>
    <dbReference type="NCBI Taxonomy" id="359787"/>
    <lineage>
        <taxon>Bacteria</taxon>
        <taxon>Bacillati</taxon>
        <taxon>Bacillota</taxon>
        <taxon>Bacilli</taxon>
        <taxon>Bacillales</taxon>
        <taxon>Staphylococcaceae</taxon>
        <taxon>Staphylococcus</taxon>
    </lineage>
</organism>
<gene>
    <name evidence="1" type="primary">dnaJ</name>
    <name type="ordered locus">SaurJH1_1671</name>
</gene>
<dbReference type="EMBL" id="CP000736">
    <property type="protein sequence ID" value="ABR52519.1"/>
    <property type="molecule type" value="Genomic_DNA"/>
</dbReference>
<dbReference type="SMR" id="A6U251"/>
<dbReference type="KEGG" id="sah:SaurJH1_1671"/>
<dbReference type="HOGENOM" id="CLU_017633_0_7_9"/>
<dbReference type="GO" id="GO:0005737">
    <property type="term" value="C:cytoplasm"/>
    <property type="evidence" value="ECO:0007669"/>
    <property type="project" value="UniProtKB-SubCell"/>
</dbReference>
<dbReference type="GO" id="GO:0005524">
    <property type="term" value="F:ATP binding"/>
    <property type="evidence" value="ECO:0007669"/>
    <property type="project" value="InterPro"/>
</dbReference>
<dbReference type="GO" id="GO:0031072">
    <property type="term" value="F:heat shock protein binding"/>
    <property type="evidence" value="ECO:0007669"/>
    <property type="project" value="InterPro"/>
</dbReference>
<dbReference type="GO" id="GO:0051082">
    <property type="term" value="F:unfolded protein binding"/>
    <property type="evidence" value="ECO:0007669"/>
    <property type="project" value="UniProtKB-UniRule"/>
</dbReference>
<dbReference type="GO" id="GO:0008270">
    <property type="term" value="F:zinc ion binding"/>
    <property type="evidence" value="ECO:0007669"/>
    <property type="project" value="UniProtKB-UniRule"/>
</dbReference>
<dbReference type="GO" id="GO:0051085">
    <property type="term" value="P:chaperone cofactor-dependent protein refolding"/>
    <property type="evidence" value="ECO:0007669"/>
    <property type="project" value="TreeGrafter"/>
</dbReference>
<dbReference type="GO" id="GO:0006260">
    <property type="term" value="P:DNA replication"/>
    <property type="evidence" value="ECO:0007669"/>
    <property type="project" value="UniProtKB-KW"/>
</dbReference>
<dbReference type="GO" id="GO:0042026">
    <property type="term" value="P:protein refolding"/>
    <property type="evidence" value="ECO:0007669"/>
    <property type="project" value="TreeGrafter"/>
</dbReference>
<dbReference type="GO" id="GO:0009408">
    <property type="term" value="P:response to heat"/>
    <property type="evidence" value="ECO:0007669"/>
    <property type="project" value="InterPro"/>
</dbReference>
<dbReference type="CDD" id="cd06257">
    <property type="entry name" value="DnaJ"/>
    <property type="match status" value="1"/>
</dbReference>
<dbReference type="CDD" id="cd10747">
    <property type="entry name" value="DnaJ_C"/>
    <property type="match status" value="1"/>
</dbReference>
<dbReference type="CDD" id="cd10719">
    <property type="entry name" value="DnaJ_zf"/>
    <property type="match status" value="1"/>
</dbReference>
<dbReference type="FunFam" id="1.10.287.110:FF:000031">
    <property type="entry name" value="Molecular chaperone DnaJ"/>
    <property type="match status" value="1"/>
</dbReference>
<dbReference type="FunFam" id="2.10.230.10:FF:000002">
    <property type="entry name" value="Molecular chaperone DnaJ"/>
    <property type="match status" value="1"/>
</dbReference>
<dbReference type="FunFam" id="2.60.260.20:FF:000004">
    <property type="entry name" value="Molecular chaperone DnaJ"/>
    <property type="match status" value="1"/>
</dbReference>
<dbReference type="Gene3D" id="1.10.287.110">
    <property type="entry name" value="DnaJ domain"/>
    <property type="match status" value="1"/>
</dbReference>
<dbReference type="Gene3D" id="2.10.230.10">
    <property type="entry name" value="Heat shock protein DnaJ, cysteine-rich domain"/>
    <property type="match status" value="1"/>
</dbReference>
<dbReference type="Gene3D" id="2.60.260.20">
    <property type="entry name" value="Urease metallochaperone UreE, N-terminal domain"/>
    <property type="match status" value="2"/>
</dbReference>
<dbReference type="HAMAP" id="MF_01152">
    <property type="entry name" value="DnaJ"/>
    <property type="match status" value="1"/>
</dbReference>
<dbReference type="InterPro" id="IPR012724">
    <property type="entry name" value="DnaJ"/>
</dbReference>
<dbReference type="InterPro" id="IPR002939">
    <property type="entry name" value="DnaJ_C"/>
</dbReference>
<dbReference type="InterPro" id="IPR001623">
    <property type="entry name" value="DnaJ_domain"/>
</dbReference>
<dbReference type="InterPro" id="IPR018253">
    <property type="entry name" value="DnaJ_domain_CS"/>
</dbReference>
<dbReference type="InterPro" id="IPR008971">
    <property type="entry name" value="HSP40/DnaJ_pept-bd"/>
</dbReference>
<dbReference type="InterPro" id="IPR001305">
    <property type="entry name" value="HSP_DnaJ_Cys-rich_dom"/>
</dbReference>
<dbReference type="InterPro" id="IPR036410">
    <property type="entry name" value="HSP_DnaJ_Cys-rich_dom_sf"/>
</dbReference>
<dbReference type="InterPro" id="IPR036869">
    <property type="entry name" value="J_dom_sf"/>
</dbReference>
<dbReference type="NCBIfam" id="TIGR02349">
    <property type="entry name" value="DnaJ_bact"/>
    <property type="match status" value="1"/>
</dbReference>
<dbReference type="NCBIfam" id="NF008035">
    <property type="entry name" value="PRK10767.1"/>
    <property type="match status" value="1"/>
</dbReference>
<dbReference type="NCBIfam" id="NF010873">
    <property type="entry name" value="PRK14280.1"/>
    <property type="match status" value="1"/>
</dbReference>
<dbReference type="PANTHER" id="PTHR43096:SF48">
    <property type="entry name" value="CHAPERONE PROTEIN DNAJ"/>
    <property type="match status" value="1"/>
</dbReference>
<dbReference type="PANTHER" id="PTHR43096">
    <property type="entry name" value="DNAJ HOMOLOG 1, MITOCHONDRIAL-RELATED"/>
    <property type="match status" value="1"/>
</dbReference>
<dbReference type="Pfam" id="PF00226">
    <property type="entry name" value="DnaJ"/>
    <property type="match status" value="1"/>
</dbReference>
<dbReference type="Pfam" id="PF01556">
    <property type="entry name" value="DnaJ_C"/>
    <property type="match status" value="1"/>
</dbReference>
<dbReference type="Pfam" id="PF00684">
    <property type="entry name" value="DnaJ_CXXCXGXG"/>
    <property type="match status" value="1"/>
</dbReference>
<dbReference type="PRINTS" id="PR00625">
    <property type="entry name" value="JDOMAIN"/>
</dbReference>
<dbReference type="SMART" id="SM00271">
    <property type="entry name" value="DnaJ"/>
    <property type="match status" value="1"/>
</dbReference>
<dbReference type="SUPFAM" id="SSF46565">
    <property type="entry name" value="Chaperone J-domain"/>
    <property type="match status" value="1"/>
</dbReference>
<dbReference type="SUPFAM" id="SSF57938">
    <property type="entry name" value="DnaJ/Hsp40 cysteine-rich domain"/>
    <property type="match status" value="1"/>
</dbReference>
<dbReference type="SUPFAM" id="SSF49493">
    <property type="entry name" value="HSP40/DnaJ peptide-binding domain"/>
    <property type="match status" value="2"/>
</dbReference>
<dbReference type="PROSITE" id="PS00636">
    <property type="entry name" value="DNAJ_1"/>
    <property type="match status" value="1"/>
</dbReference>
<dbReference type="PROSITE" id="PS50076">
    <property type="entry name" value="DNAJ_2"/>
    <property type="match status" value="1"/>
</dbReference>
<dbReference type="PROSITE" id="PS51188">
    <property type="entry name" value="ZF_CR"/>
    <property type="match status" value="1"/>
</dbReference>
<evidence type="ECO:0000255" key="1">
    <source>
        <dbReference type="HAMAP-Rule" id="MF_01152"/>
    </source>
</evidence>
<keyword id="KW-0143">Chaperone</keyword>
<keyword id="KW-0963">Cytoplasm</keyword>
<keyword id="KW-0235">DNA replication</keyword>
<keyword id="KW-0479">Metal-binding</keyword>
<keyword id="KW-0677">Repeat</keyword>
<keyword id="KW-0346">Stress response</keyword>
<keyword id="KW-0862">Zinc</keyword>
<keyword id="KW-0863">Zinc-finger</keyword>
<sequence length="379" mass="41761">MAKRDYYEVLGISKDASKDEIKKAYRKLSKKYHPDINKEEGADEKFKEISEAYEVLSDDNKRASYDQFGHDGPQGFGGQGFNGSDFGGFSGFGGGGFEDIFSSFFGGGRQRDPNAPQKGDDLQYTMTLTFEEAVFGTTKEISIRKDVTCETCHGDGAKPGTSKKTCSYCNGAGHVAVEQNTILGRVRTEQVCPKCNGSGQEFEEACPTCHGKGTENKTVKLEVKVPEGVDNEQQIRLAGEGSPGVNGGPAGDLYVVFRVKPSETFKRDGDDIYYKLNVSFPQAALGDEIKIPTLNNEVMLTIPAGTQTGKQFRLKEKGIKNVHGYGYGDLYVDIKVVTPTKLTDRQKELMKEFAQLNGEEINEQPSNFKDRAKRFFKGE</sequence>
<name>DNAJ_STAA2</name>
<proteinExistence type="inferred from homology"/>
<protein>
    <recommendedName>
        <fullName evidence="1">Chaperone protein DnaJ</fullName>
    </recommendedName>
</protein>
<accession>A6U251</accession>
<comment type="function">
    <text evidence="1">Participates actively in the response to hyperosmotic and heat shock by preventing the aggregation of stress-denatured proteins and by disaggregating proteins, also in an autonomous, DnaK-independent fashion. Unfolded proteins bind initially to DnaJ; upon interaction with the DnaJ-bound protein, DnaK hydrolyzes its bound ATP, resulting in the formation of a stable complex. GrpE releases ADP from DnaK; ATP binding to DnaK triggers the release of the substrate protein, thus completing the reaction cycle. Several rounds of ATP-dependent interactions between DnaJ, DnaK and GrpE are required for fully efficient folding. Also involved, together with DnaK and GrpE, in the DNA replication of plasmids through activation of initiation proteins.</text>
</comment>
<comment type="cofactor">
    <cofactor evidence="1">
        <name>Zn(2+)</name>
        <dbReference type="ChEBI" id="CHEBI:29105"/>
    </cofactor>
    <text evidence="1">Binds 2 Zn(2+) ions per monomer.</text>
</comment>
<comment type="subunit">
    <text evidence="1">Homodimer.</text>
</comment>
<comment type="subcellular location">
    <subcellularLocation>
        <location evidence="1">Cytoplasm</location>
    </subcellularLocation>
</comment>
<comment type="domain">
    <text evidence="1">The J domain is necessary and sufficient to stimulate DnaK ATPase activity. Zinc center 1 plays an important role in the autonomous, DnaK-independent chaperone activity of DnaJ. Zinc center 2 is essential for interaction with DnaK and for DnaJ activity.</text>
</comment>
<comment type="similarity">
    <text evidence="1">Belongs to the DnaJ family.</text>
</comment>
<reference key="1">
    <citation type="submission" date="2007-06" db="EMBL/GenBank/DDBJ databases">
        <title>Complete sequence of chromosome of Staphylococcus aureus subsp. aureus JH1.</title>
        <authorList>
            <consortium name="US DOE Joint Genome Institute"/>
            <person name="Copeland A."/>
            <person name="Lucas S."/>
            <person name="Lapidus A."/>
            <person name="Barry K."/>
            <person name="Detter J.C."/>
            <person name="Glavina del Rio T."/>
            <person name="Hammon N."/>
            <person name="Israni S."/>
            <person name="Dalin E."/>
            <person name="Tice H."/>
            <person name="Pitluck S."/>
            <person name="Chain P."/>
            <person name="Malfatti S."/>
            <person name="Shin M."/>
            <person name="Vergez L."/>
            <person name="Schmutz J."/>
            <person name="Larimer F."/>
            <person name="Land M."/>
            <person name="Hauser L."/>
            <person name="Kyrpides N."/>
            <person name="Ivanova N."/>
            <person name="Tomasz A."/>
            <person name="Richardson P."/>
        </authorList>
    </citation>
    <scope>NUCLEOTIDE SEQUENCE [LARGE SCALE GENOMIC DNA]</scope>
    <source>
        <strain>JH1</strain>
    </source>
</reference>
<feature type="chain" id="PRO_1000085309" description="Chaperone protein DnaJ">
    <location>
        <begin position="1"/>
        <end position="379"/>
    </location>
</feature>
<feature type="domain" description="J" evidence="1">
    <location>
        <begin position="5"/>
        <end position="69"/>
    </location>
</feature>
<feature type="repeat" description="CXXCXGXG motif">
    <location>
        <begin position="149"/>
        <end position="156"/>
    </location>
</feature>
<feature type="repeat" description="CXXCXGXG motif">
    <location>
        <begin position="166"/>
        <end position="173"/>
    </location>
</feature>
<feature type="repeat" description="CXXCXGXG motif">
    <location>
        <begin position="192"/>
        <end position="199"/>
    </location>
</feature>
<feature type="repeat" description="CXXCXGXG motif">
    <location>
        <begin position="206"/>
        <end position="213"/>
    </location>
</feature>
<feature type="zinc finger region" description="CR-type" evidence="1">
    <location>
        <begin position="136"/>
        <end position="218"/>
    </location>
</feature>
<feature type="binding site" evidence="1">
    <location>
        <position position="149"/>
    </location>
    <ligand>
        <name>Zn(2+)</name>
        <dbReference type="ChEBI" id="CHEBI:29105"/>
        <label>1</label>
    </ligand>
</feature>
<feature type="binding site" evidence="1">
    <location>
        <position position="152"/>
    </location>
    <ligand>
        <name>Zn(2+)</name>
        <dbReference type="ChEBI" id="CHEBI:29105"/>
        <label>1</label>
    </ligand>
</feature>
<feature type="binding site" evidence="1">
    <location>
        <position position="166"/>
    </location>
    <ligand>
        <name>Zn(2+)</name>
        <dbReference type="ChEBI" id="CHEBI:29105"/>
        <label>2</label>
    </ligand>
</feature>
<feature type="binding site" evidence="1">
    <location>
        <position position="169"/>
    </location>
    <ligand>
        <name>Zn(2+)</name>
        <dbReference type="ChEBI" id="CHEBI:29105"/>
        <label>2</label>
    </ligand>
</feature>
<feature type="binding site" evidence="1">
    <location>
        <position position="192"/>
    </location>
    <ligand>
        <name>Zn(2+)</name>
        <dbReference type="ChEBI" id="CHEBI:29105"/>
        <label>2</label>
    </ligand>
</feature>
<feature type="binding site" evidence="1">
    <location>
        <position position="195"/>
    </location>
    <ligand>
        <name>Zn(2+)</name>
        <dbReference type="ChEBI" id="CHEBI:29105"/>
        <label>2</label>
    </ligand>
</feature>
<feature type="binding site" evidence="1">
    <location>
        <position position="206"/>
    </location>
    <ligand>
        <name>Zn(2+)</name>
        <dbReference type="ChEBI" id="CHEBI:29105"/>
        <label>1</label>
    </ligand>
</feature>
<feature type="binding site" evidence="1">
    <location>
        <position position="209"/>
    </location>
    <ligand>
        <name>Zn(2+)</name>
        <dbReference type="ChEBI" id="CHEBI:29105"/>
        <label>1</label>
    </ligand>
</feature>